<evidence type="ECO:0000255" key="1"/>
<evidence type="ECO:0000256" key="2">
    <source>
        <dbReference type="SAM" id="MobiDB-lite"/>
    </source>
</evidence>
<evidence type="ECO:0000269" key="3">
    <source>
    </source>
</evidence>
<evidence type="ECO:0000269" key="4">
    <source>
    </source>
</evidence>
<evidence type="ECO:0000269" key="5">
    <source>
    </source>
</evidence>
<evidence type="ECO:0000303" key="6">
    <source>
    </source>
</evidence>
<evidence type="ECO:0000303" key="7">
    <source>
    </source>
</evidence>
<evidence type="ECO:0000303" key="8">
    <source>
    </source>
</evidence>
<evidence type="ECO:0000305" key="9"/>
<evidence type="ECO:0000305" key="10">
    <source>
    </source>
</evidence>
<evidence type="ECO:0000312" key="11">
    <source>
        <dbReference type="EMBL" id="EDO48496.1"/>
    </source>
</evidence>
<evidence type="ECO:0000312" key="12">
    <source>
        <dbReference type="Proteomes" id="UP000001593"/>
    </source>
</evidence>
<protein>
    <recommendedName>
        <fullName evidence="6">Nematocyst expressed protein 3</fullName>
        <shortName evidence="6">NEP-3</shortName>
        <shortName evidence="7 8">NEP3</shortName>
    </recommendedName>
</protein>
<proteinExistence type="evidence at protein level"/>
<sequence>MKLTYILLIAVVGVAIEAKSVKKSKAHHKKKRHETLADNYKLNRIKDSDCKDVADDCKAFGKLEKDDENSCFNNPDKARNECPVSCKLCVSKRSKKQSDYMGGYDLQPQQCSQQSCYETPQWSVQNCAVTCQLCQPGVSSGPVDQDVRCPFWGQYGYCSQQQQQQQTDGYISNNCPFSCNTYGSAQPAQQPYPYPIEALSPYQPNAMPTPPQGVTPAPLPPYFQQQGYGYPQQPQPTQPVQPGQTQAPTAAQSTPAPVQTTPASGKTTTEAAEETTTEAAAEGAETTAAPAATQAPAAAGQEGQQPAAGGQEPQEAQEQEGQQPGTEPAQSDKSNKKKHKKDKAQKKSKSHKKQH</sequence>
<gene>
    <name evidence="11" type="ORF">v1g238654</name>
</gene>
<reference evidence="11 12" key="1">
    <citation type="journal article" date="2007" name="Science">
        <title>Sea anemone genome reveals ancestral eumetazoan gene repertoire and genomic organization.</title>
        <authorList>
            <person name="Putnam N.H."/>
            <person name="Srivastava M."/>
            <person name="Hellsten U."/>
            <person name="Dirks B."/>
            <person name="Chapman J."/>
            <person name="Salamov A."/>
            <person name="Terry A."/>
            <person name="Shapiro H."/>
            <person name="Lindquist E."/>
            <person name="Kapitonov V.V."/>
            <person name="Jurka J."/>
            <person name="Genikhovich G."/>
            <person name="Grigoriev I.V."/>
            <person name="Lucas S.M."/>
            <person name="Steele R.E."/>
            <person name="Finnerty J.R."/>
            <person name="Technau U."/>
            <person name="Martindale M.Q."/>
            <person name="Rokhsar D.S."/>
        </authorList>
    </citation>
    <scope>NUCLEOTIDE SEQUENCE [LARGE SCALE GENOMIC DNA]</scope>
    <source>
        <strain evidence="12">CH2 X CH6</strain>
    </source>
</reference>
<reference key="2">
    <citation type="journal article" date="2013" name="Mar. Biotechnol.">
        <title>Analysis of soluble protein contents from the nematocysts of a model sea anemone sheds light on venom evolution.</title>
        <authorList>
            <person name="Moran Y."/>
            <person name="Praher D."/>
            <person name="Schlesinger A."/>
            <person name="Ayalon A."/>
            <person name="Tal Y."/>
            <person name="Technau U."/>
        </authorList>
    </citation>
    <scope>NUCLEOTIDE SEQUENCE [GENOMIC DNA]</scope>
    <scope>IDENTIFICATION BY MASS SPECTROMETRY</scope>
    <scope>SUBCELLULAR LOCATION</scope>
    <scope>TISSUE SPECIFICITY</scope>
</reference>
<reference key="3">
    <citation type="journal article" date="2018" name="Elife">
        <title>Dynamics of venom composition across a complex life cycle.</title>
        <authorList>
            <person name="Columbus-Shenkar Y.Y."/>
            <person name="Sachkova M.Y."/>
            <person name="Macrander J."/>
            <person name="Fridrich A."/>
            <person name="Modepalli V."/>
            <person name="Reitzel A.M."/>
            <person name="Sunagar K."/>
            <person name="Moran Y."/>
        </authorList>
    </citation>
    <scope>FUNCTION</scope>
    <scope>DEVELOPMENTAL STAGE</scope>
    <scope>TISSUE SPECIFICITY</scope>
    <scope>RECOMBINANT EXPRESSION</scope>
</reference>
<reference key="4">
    <citation type="journal article" date="2019" name="Mol. Biol. Evol.">
        <title>The birth and death of toxins with distinct functions: a case study in the sea anemone Nematostella.</title>
        <authorList>
            <person name="Sachkova M.Y."/>
            <person name="Singer S.A."/>
            <person name="Macrander J."/>
            <person name="Reitzel A.M."/>
            <person name="Peigneur S."/>
            <person name="Tytgat J."/>
            <person name="Moran Y."/>
        </authorList>
    </citation>
    <scope>DEVELOPMENTAL STAGE</scope>
</reference>
<feature type="signal peptide" evidence="1">
    <location>
        <begin position="1"/>
        <end position="18"/>
    </location>
</feature>
<feature type="chain" id="PRO_5002711323" description="Nematocyst expressed protein 3" evidence="10">
    <location>
        <begin position="19"/>
        <end position="91"/>
    </location>
</feature>
<feature type="propeptide" id="PRO_0000453820" evidence="10">
    <location>
        <begin position="92"/>
        <end position="355"/>
    </location>
</feature>
<feature type="domain" description="ShKT 1" evidence="10">
    <location>
        <begin position="50"/>
        <end position="89"/>
    </location>
</feature>
<feature type="domain" description="ShKT 2" evidence="10">
    <location>
        <begin position="107"/>
        <end position="134"/>
    </location>
</feature>
<feature type="domain" description="ShKT 3" evidence="10">
    <location>
        <begin position="140"/>
        <end position="182"/>
    </location>
</feature>
<feature type="region of interest" description="Disordered" evidence="2">
    <location>
        <begin position="202"/>
        <end position="355"/>
    </location>
</feature>
<feature type="compositionally biased region" description="Pro residues" evidence="2">
    <location>
        <begin position="207"/>
        <end position="221"/>
    </location>
</feature>
<feature type="compositionally biased region" description="Low complexity" evidence="2">
    <location>
        <begin position="222"/>
        <end position="232"/>
    </location>
</feature>
<feature type="compositionally biased region" description="Low complexity" evidence="2">
    <location>
        <begin position="240"/>
        <end position="270"/>
    </location>
</feature>
<feature type="compositionally biased region" description="Low complexity" evidence="2">
    <location>
        <begin position="277"/>
        <end position="332"/>
    </location>
</feature>
<feature type="compositionally biased region" description="Basic residues" evidence="2">
    <location>
        <begin position="335"/>
        <end position="355"/>
    </location>
</feature>
<feature type="disulfide bond" evidence="9">
    <location>
        <begin position="50"/>
        <end position="89"/>
    </location>
</feature>
<feature type="disulfide bond" evidence="9">
    <location>
        <begin position="57"/>
        <end position="82"/>
    </location>
</feature>
<feature type="disulfide bond" evidence="9">
    <location>
        <begin position="71"/>
        <end position="86"/>
    </location>
</feature>
<feature type="disulfide bond" evidence="9">
    <location>
        <begin position="116"/>
        <end position="131"/>
    </location>
</feature>
<feature type="disulfide bond" evidence="9">
    <location>
        <begin position="149"/>
        <end position="175"/>
    </location>
</feature>
<feature type="disulfide bond" evidence="9">
    <location>
        <begin position="158"/>
        <end position="179"/>
    </location>
</feature>
<name>NEP3_NEMVE</name>
<comment type="function">
    <text evidence="4">Neurotoxin (PubMed:29424690). In vivo, induces pronounced contraction and tail twitching on zebrafish larvae, as well as death 5 hours later (PubMed:29424690).</text>
</comment>
<comment type="subcellular location">
    <subcellularLocation>
        <location evidence="3">Nematocyst</location>
    </subcellularLocation>
    <subcellularLocation>
        <location evidence="3">Secreted</location>
    </subcellularLocation>
</comment>
<comment type="tissue specificity">
    <text evidence="3 4">Nematocytes (PubMed:23151943, PubMed:29424690). In late planulae, transcripts are found throughout the ectoderm in nematocytes, with high concentration of expressing cells in the oral pole (PubMed:29424690). In primary polyps, is expressed in nematocytes in the body wall and physa ectoderm and in the upper and lower pharynx (PubMed:29424690).</text>
</comment>
<comment type="developmental stage">
    <text evidence="4 5">Highly expressed in late planulae, primary polyps, and both adult males and females (at protein level) (PubMed:31134275). Consistant with protein expression, transcripts are moderately expressed in gastrulae and highly expressed in early and late planulae, metamorphosing planulae, primary and juvenile polyps, and both adult males and females (PubMed:29424690, PubMed:31134275). Low expression in unfertilized eggs and blastulae (PubMed:31134275).</text>
</comment>
<comment type="similarity">
    <text evidence="9">Belongs to the NEP3 family.</text>
</comment>
<comment type="caution">
    <text evidence="4">The exact range of the peptide is deduced from experimental results. It as been shown that the mature peptide weight is 10 kDa and is only composed of the first ShKT domain.</text>
</comment>
<keyword id="KW-0165">Cleavage on pair of basic residues</keyword>
<keyword id="KW-1015">Disulfide bond</keyword>
<keyword id="KW-0166">Nematocyst</keyword>
<keyword id="KW-0528">Neurotoxin</keyword>
<keyword id="KW-1185">Reference proteome</keyword>
<keyword id="KW-0964">Secreted</keyword>
<keyword id="KW-0732">Signal</keyword>
<keyword id="KW-0800">Toxin</keyword>
<accession>A7RJ12</accession>
<organism>
    <name type="scientific">Nematostella vectensis</name>
    <name type="common">Starlet sea anemone</name>
    <dbReference type="NCBI Taxonomy" id="45351"/>
    <lineage>
        <taxon>Eukaryota</taxon>
        <taxon>Metazoa</taxon>
        <taxon>Cnidaria</taxon>
        <taxon>Anthozoa</taxon>
        <taxon>Hexacorallia</taxon>
        <taxon>Actiniaria</taxon>
        <taxon>Edwardsiidae</taxon>
        <taxon>Nematostella</taxon>
    </lineage>
</organism>
<dbReference type="EMBL" id="DS469513">
    <property type="protein sequence ID" value="EDO48496.1"/>
    <property type="molecule type" value="Genomic_DNA"/>
</dbReference>
<dbReference type="RefSeq" id="XP_001640559.1">
    <property type="nucleotide sequence ID" value="XM_001640509.1"/>
</dbReference>
<dbReference type="STRING" id="45351.A7RJ12"/>
<dbReference type="EnsemblMetazoa" id="EDO48496">
    <property type="protein sequence ID" value="EDO48496"/>
    <property type="gene ID" value="NEMVEDRAFT_v1g238654"/>
</dbReference>
<dbReference type="eggNOG" id="KOG1217">
    <property type="taxonomic scope" value="Eukaryota"/>
</dbReference>
<dbReference type="HOGENOM" id="CLU_781441_0_0_1"/>
<dbReference type="InParanoid" id="A7RJ12"/>
<dbReference type="OMA" id="HEICLHS"/>
<dbReference type="Proteomes" id="UP000001593">
    <property type="component" value="Unassembled WGS sequence"/>
</dbReference>
<dbReference type="GO" id="GO:0005576">
    <property type="term" value="C:extracellular region"/>
    <property type="evidence" value="ECO:0007669"/>
    <property type="project" value="UniProtKB-SubCell"/>
</dbReference>
<dbReference type="GO" id="GO:0042151">
    <property type="term" value="C:nematocyst"/>
    <property type="evidence" value="ECO:0007669"/>
    <property type="project" value="UniProtKB-SubCell"/>
</dbReference>
<dbReference type="GO" id="GO:0090729">
    <property type="term" value="F:toxin activity"/>
    <property type="evidence" value="ECO:0007669"/>
    <property type="project" value="UniProtKB-KW"/>
</dbReference>
<dbReference type="InterPro" id="IPR003582">
    <property type="entry name" value="ShKT_dom"/>
</dbReference>
<dbReference type="SMART" id="SM00254">
    <property type="entry name" value="ShKT"/>
    <property type="match status" value="2"/>
</dbReference>